<dbReference type="EC" id="2.3.1.225" evidence="3"/>
<dbReference type="EMBL" id="AB168877">
    <property type="protein sequence ID" value="BAE00980.1"/>
    <property type="molecule type" value="mRNA"/>
</dbReference>
<dbReference type="RefSeq" id="NP_001272132.1">
    <property type="nucleotide sequence ID" value="NM_001285203.1"/>
</dbReference>
<dbReference type="RefSeq" id="XP_045217236.1">
    <property type="nucleotide sequence ID" value="XM_045361301.2"/>
</dbReference>
<dbReference type="SMR" id="Q4R7E2"/>
<dbReference type="STRING" id="9541.ENSMFAP00000038469"/>
<dbReference type="GeneID" id="101926118"/>
<dbReference type="VEuPathDB" id="HostDB:ENSMFAG00000041608"/>
<dbReference type="eggNOG" id="KOG1313">
    <property type="taxonomic scope" value="Eukaryota"/>
</dbReference>
<dbReference type="OMA" id="DGIVWDC"/>
<dbReference type="OrthoDB" id="331948at2759"/>
<dbReference type="Proteomes" id="UP000233100">
    <property type="component" value="Chromosome 9"/>
</dbReference>
<dbReference type="GO" id="GO:0005789">
    <property type="term" value="C:endoplasmic reticulum membrane"/>
    <property type="evidence" value="ECO:0007669"/>
    <property type="project" value="UniProtKB-SubCell"/>
</dbReference>
<dbReference type="GO" id="GO:0016409">
    <property type="term" value="F:palmitoyltransferase activity"/>
    <property type="evidence" value="ECO:0000250"/>
    <property type="project" value="UniProtKB"/>
</dbReference>
<dbReference type="GO" id="GO:0019706">
    <property type="term" value="F:protein-cysteine S-palmitoyltransferase activity"/>
    <property type="evidence" value="ECO:0007669"/>
    <property type="project" value="UniProtKB-EC"/>
</dbReference>
<dbReference type="GO" id="GO:0006915">
    <property type="term" value="P:apoptotic process"/>
    <property type="evidence" value="ECO:0007669"/>
    <property type="project" value="UniProtKB-KW"/>
</dbReference>
<dbReference type="GO" id="GO:0006974">
    <property type="term" value="P:DNA damage response"/>
    <property type="evidence" value="ECO:0000250"/>
    <property type="project" value="UniProtKB"/>
</dbReference>
<dbReference type="GO" id="GO:0001654">
    <property type="term" value="P:eye development"/>
    <property type="evidence" value="ECO:0000250"/>
    <property type="project" value="UniProtKB"/>
</dbReference>
<dbReference type="GO" id="GO:0007507">
    <property type="term" value="P:heart development"/>
    <property type="evidence" value="ECO:0000250"/>
    <property type="project" value="UniProtKB"/>
</dbReference>
<dbReference type="GO" id="GO:0018345">
    <property type="term" value="P:protein palmitoylation"/>
    <property type="evidence" value="ECO:0000250"/>
    <property type="project" value="UniProtKB"/>
</dbReference>
<dbReference type="GO" id="GO:0021537">
    <property type="term" value="P:telencephalon development"/>
    <property type="evidence" value="ECO:0000250"/>
    <property type="project" value="UniProtKB"/>
</dbReference>
<dbReference type="InterPro" id="IPR001594">
    <property type="entry name" value="Palmitoyltrfase_DHHC"/>
</dbReference>
<dbReference type="InterPro" id="IPR039859">
    <property type="entry name" value="PFA4/ZDH16/20/ERF2-like"/>
</dbReference>
<dbReference type="PANTHER" id="PTHR12246">
    <property type="entry name" value="PALMITOYLTRANSFERASE ZDHHC16"/>
    <property type="match status" value="1"/>
</dbReference>
<dbReference type="Pfam" id="PF01529">
    <property type="entry name" value="DHHC"/>
    <property type="match status" value="1"/>
</dbReference>
<dbReference type="PROSITE" id="PS50216">
    <property type="entry name" value="DHHC"/>
    <property type="match status" value="1"/>
</dbReference>
<reference key="1">
    <citation type="submission" date="2005-06" db="EMBL/GenBank/DDBJ databases">
        <title>DNA sequences of macaque genes expressed in brain or testis and its evolutionary implications.</title>
        <authorList>
            <consortium name="International consortium for macaque cDNA sequencing and analysis"/>
        </authorList>
    </citation>
    <scope>NUCLEOTIDE SEQUENCE [LARGE SCALE MRNA]</scope>
    <source>
        <tissue>Testis</tissue>
    </source>
</reference>
<gene>
    <name evidence="3" type="primary">ZDHHC16</name>
    <name evidence="7" type="ORF">QtsA-15522</name>
</gene>
<keyword id="KW-0012">Acyltransferase</keyword>
<keyword id="KW-0053">Apoptosis</keyword>
<keyword id="KW-0227">DNA damage</keyword>
<keyword id="KW-0256">Endoplasmic reticulum</keyword>
<keyword id="KW-0472">Membrane</keyword>
<keyword id="KW-1185">Reference proteome</keyword>
<keyword id="KW-0808">Transferase</keyword>
<keyword id="KW-0812">Transmembrane</keyword>
<keyword id="KW-1133">Transmembrane helix</keyword>
<accession>Q4R7E2</accession>
<name>ZDH16_MACFA</name>
<comment type="function">
    <text evidence="1 3 4">Palmitoyl acyltransferase that mediates palmitoylation of proteins such as PLN and ZDHHC6 (By similarity). Required during embryonic heart development and cardiac function, possibly by mediating palmitoylation of PLN, thereby affecting PLN phosphorylation and homooligomerization (By similarity). Also required for eye development (By similarity). Palmitoylates ZDHHC6, affecting the quaternary assembly of ZDHHC6, its localization, stability and function (By similarity). May play a role in DNA damage response (By similarity). May be involved in apoptosis regulation (By similarity). Involved in the proliferation of neural stem cells by regulating the FGF/ERK pathway (By similarity).</text>
</comment>
<comment type="catalytic activity">
    <reaction evidence="3">
        <text>L-cysteinyl-[protein] + hexadecanoyl-CoA = S-hexadecanoyl-L-cysteinyl-[protein] + CoA</text>
        <dbReference type="Rhea" id="RHEA:36683"/>
        <dbReference type="Rhea" id="RHEA-COMP:10131"/>
        <dbReference type="Rhea" id="RHEA-COMP:11032"/>
        <dbReference type="ChEBI" id="CHEBI:29950"/>
        <dbReference type="ChEBI" id="CHEBI:57287"/>
        <dbReference type="ChEBI" id="CHEBI:57379"/>
        <dbReference type="ChEBI" id="CHEBI:74151"/>
        <dbReference type="EC" id="2.3.1.225"/>
    </reaction>
</comment>
<comment type="subunit">
    <text evidence="3 4">Interacts with ABL1 (By similarity). Interacts with COPS5/JAB1 (By similarity).</text>
</comment>
<comment type="subcellular location">
    <subcellularLocation>
        <location evidence="3">Endoplasmic reticulum membrane</location>
        <topology evidence="4">Multi-pass membrane protein</topology>
    </subcellularLocation>
</comment>
<comment type="domain">
    <text evidence="2">The DHHC domain is required for palmitoyltransferase activity.</text>
</comment>
<comment type="similarity">
    <text evidence="8">Belongs to the DHHC palmitoyltransferase family.</text>
</comment>
<feature type="chain" id="PRO_0000212898" description="Palmitoyltransferase ZDHHC16">
    <location>
        <begin position="1"/>
        <end position="377"/>
    </location>
</feature>
<feature type="topological domain" description="Cytoplasmic" evidence="5">
    <location>
        <begin position="1"/>
        <end position="77"/>
    </location>
</feature>
<feature type="transmembrane region" description="Helical" evidence="5">
    <location>
        <begin position="78"/>
        <end position="98"/>
    </location>
</feature>
<feature type="topological domain" description="Lumenal" evidence="5">
    <location>
        <begin position="99"/>
        <end position="116"/>
    </location>
</feature>
<feature type="transmembrane region" description="Helical" evidence="5">
    <location>
        <begin position="117"/>
        <end position="137"/>
    </location>
</feature>
<feature type="topological domain" description="Cytoplasmic" evidence="5">
    <location>
        <begin position="138"/>
        <end position="198"/>
    </location>
</feature>
<feature type="transmembrane region" description="Helical" evidence="5">
    <location>
        <begin position="199"/>
        <end position="219"/>
    </location>
</feature>
<feature type="topological domain" description="Lumenal" evidence="5">
    <location>
        <begin position="220"/>
        <end position="266"/>
    </location>
</feature>
<feature type="transmembrane region" description="Helical" evidence="5">
    <location>
        <begin position="267"/>
        <end position="287"/>
    </location>
</feature>
<feature type="topological domain" description="Cytoplasmic" evidence="5">
    <location>
        <begin position="288"/>
        <end position="377"/>
    </location>
</feature>
<feature type="domain" description="DHHC" evidence="6">
    <location>
        <begin position="155"/>
        <end position="205"/>
    </location>
</feature>
<feature type="active site" description="S-palmitoyl cysteine intermediate" evidence="2">
    <location>
        <position position="185"/>
    </location>
</feature>
<protein>
    <recommendedName>
        <fullName evidence="3">Palmitoyltransferase ZDHHC16</fullName>
        <ecNumber evidence="3">2.3.1.225</ecNumber>
    </recommendedName>
    <alternativeName>
        <fullName evidence="3">Zinc finger DHHC domain-containing protein 16</fullName>
        <shortName evidence="3">DHHC-16</shortName>
    </alternativeName>
</protein>
<proteinExistence type="evidence at transcript level"/>
<organism>
    <name type="scientific">Macaca fascicularis</name>
    <name type="common">Crab-eating macaque</name>
    <name type="synonym">Cynomolgus monkey</name>
    <dbReference type="NCBI Taxonomy" id="9541"/>
    <lineage>
        <taxon>Eukaryota</taxon>
        <taxon>Metazoa</taxon>
        <taxon>Chordata</taxon>
        <taxon>Craniata</taxon>
        <taxon>Vertebrata</taxon>
        <taxon>Euteleostomi</taxon>
        <taxon>Mammalia</taxon>
        <taxon>Eutheria</taxon>
        <taxon>Euarchontoglires</taxon>
        <taxon>Primates</taxon>
        <taxon>Haplorrhini</taxon>
        <taxon>Catarrhini</taxon>
        <taxon>Cercopithecidae</taxon>
        <taxon>Cercopithecinae</taxon>
        <taxon>Macaca</taxon>
    </lineage>
</organism>
<sequence length="377" mass="43645">MRGQRSLLLGPARLCLRLLLLLGYRRRCPPLLRGLVQRWRYGKVCLRSLLYNSFGGSDTAVDAAFEPVYWLVDNVIRWFGVVFVVLVIVLTGSIVAIAYLCVLPLILRTYSVPRLCWHFFYSHWNLILIVFHYYQAITTPPGYPPQGRNDIATVSICKKCIYPKPARTHHCSICNRCVLKMDHHCPWLNNCVGHYNHRYFFSFCFFMTLGCVYCSYGSWDLFREAYAAIEKMKQLDKNKLQAVANQTYHQTPPPIFSFRERMTHKSLVYLWFLCSSVALALGALTVWHAVLISRGETSIERHINKKERRRLQAKGRVFRNPYNYGCLDNWKVFLGVDTGRHWLTRVLLPSSHLPHGNGMSWEPPPWVTAHSASVMAV</sequence>
<evidence type="ECO:0000250" key="1">
    <source>
        <dbReference type="UniProtKB" id="B8A4F0"/>
    </source>
</evidence>
<evidence type="ECO:0000250" key="2">
    <source>
        <dbReference type="UniProtKB" id="Q8IUH5"/>
    </source>
</evidence>
<evidence type="ECO:0000250" key="3">
    <source>
        <dbReference type="UniProtKB" id="Q969W1"/>
    </source>
</evidence>
<evidence type="ECO:0000250" key="4">
    <source>
        <dbReference type="UniProtKB" id="Q9ESG8"/>
    </source>
</evidence>
<evidence type="ECO:0000255" key="5"/>
<evidence type="ECO:0000255" key="6">
    <source>
        <dbReference type="PROSITE-ProRule" id="PRU00067"/>
    </source>
</evidence>
<evidence type="ECO:0000303" key="7">
    <source ref="1"/>
</evidence>
<evidence type="ECO:0000305" key="8"/>